<proteinExistence type="evidence at protein level"/>
<protein>
    <recommendedName>
        <fullName>N-isopropylammelide isopropyl amidohydrolase</fullName>
        <ecNumber evidence="1 2">3.5.4.42</ecNumber>
    </recommendedName>
</protein>
<dbReference type="EC" id="3.5.4.42" evidence="1 2"/>
<dbReference type="EMBL" id="U66917">
    <property type="protein sequence ID" value="AAB96621.1"/>
    <property type="molecule type" value="Genomic_DNA"/>
</dbReference>
<dbReference type="RefSeq" id="NP_862508.1">
    <property type="nucleotide sequence ID" value="NC_004956.1"/>
</dbReference>
<dbReference type="RefSeq" id="WP_011117177.1">
    <property type="nucleotide sequence ID" value="NZ_CM003636.1"/>
</dbReference>
<dbReference type="PDB" id="2QT3">
    <property type="method" value="X-ray"/>
    <property type="resolution" value="2.24 A"/>
    <property type="chains" value="A/B=1-403"/>
</dbReference>
<dbReference type="PDB" id="4CQB">
    <property type="method" value="X-ray"/>
    <property type="resolution" value="1.84 A"/>
    <property type="chains" value="A/B=1-403"/>
</dbReference>
<dbReference type="PDB" id="4CQC">
    <property type="method" value="X-ray"/>
    <property type="resolution" value="2.20 A"/>
    <property type="chains" value="A/B=1-403"/>
</dbReference>
<dbReference type="PDB" id="4CQD">
    <property type="method" value="X-ray"/>
    <property type="resolution" value="2.25 A"/>
    <property type="chains" value="A/B=1-403"/>
</dbReference>
<dbReference type="PDB" id="5AKQ">
    <property type="method" value="X-ray"/>
    <property type="resolution" value="2.60 A"/>
    <property type="chains" value="A/B=1-403"/>
</dbReference>
<dbReference type="PDBsum" id="2QT3"/>
<dbReference type="PDBsum" id="4CQB"/>
<dbReference type="PDBsum" id="4CQC"/>
<dbReference type="PDBsum" id="4CQD"/>
<dbReference type="PDBsum" id="5AKQ"/>
<dbReference type="SMR" id="O52063"/>
<dbReference type="KEGG" id="ag:AAB96621"/>
<dbReference type="BioCyc" id="MetaCyc:MONOMER-921"/>
<dbReference type="BRENDA" id="3.5.4.42">
    <property type="organism ID" value="5085"/>
</dbReference>
<dbReference type="UniPathway" id="UPA00008">
    <property type="reaction ID" value="UER00501"/>
</dbReference>
<dbReference type="EvolutionaryTrace" id="O52063"/>
<dbReference type="GO" id="GO:0005737">
    <property type="term" value="C:cytoplasm"/>
    <property type="evidence" value="ECO:0007669"/>
    <property type="project" value="UniProtKB-SubCell"/>
</dbReference>
<dbReference type="GO" id="GO:0016814">
    <property type="term" value="F:hydrolase activity, acting on carbon-nitrogen (but not peptide) bonds, in cyclic amidines"/>
    <property type="evidence" value="ECO:0007669"/>
    <property type="project" value="TreeGrafter"/>
</dbReference>
<dbReference type="GO" id="GO:0046872">
    <property type="term" value="F:metal ion binding"/>
    <property type="evidence" value="ECO:0007669"/>
    <property type="project" value="UniProtKB-KW"/>
</dbReference>
<dbReference type="GO" id="GO:0018764">
    <property type="term" value="F:N-isopropylammelide isopropylaminohydrolase activity"/>
    <property type="evidence" value="ECO:0007669"/>
    <property type="project" value="UniProtKB-EC"/>
</dbReference>
<dbReference type="GO" id="GO:0019381">
    <property type="term" value="P:atrazine catabolic process"/>
    <property type="evidence" value="ECO:0007669"/>
    <property type="project" value="UniProtKB-UniPathway"/>
</dbReference>
<dbReference type="CDD" id="cd01293">
    <property type="entry name" value="Bact_CD"/>
    <property type="match status" value="1"/>
</dbReference>
<dbReference type="Gene3D" id="3.20.20.140">
    <property type="entry name" value="Metal-dependent hydrolases"/>
    <property type="match status" value="1"/>
</dbReference>
<dbReference type="Gene3D" id="2.30.40.10">
    <property type="entry name" value="Urease, subunit C, domain 1"/>
    <property type="match status" value="1"/>
</dbReference>
<dbReference type="InterPro" id="IPR013108">
    <property type="entry name" value="Amidohydro_3"/>
</dbReference>
<dbReference type="InterPro" id="IPR011059">
    <property type="entry name" value="Metal-dep_hydrolase_composite"/>
</dbReference>
<dbReference type="InterPro" id="IPR032466">
    <property type="entry name" value="Metal_Hydrolase"/>
</dbReference>
<dbReference type="InterPro" id="IPR052349">
    <property type="entry name" value="Metallo-hydrolase_Enzymes"/>
</dbReference>
<dbReference type="PANTHER" id="PTHR32027:SF9">
    <property type="entry name" value="BLL3847 PROTEIN"/>
    <property type="match status" value="1"/>
</dbReference>
<dbReference type="PANTHER" id="PTHR32027">
    <property type="entry name" value="CYTOSINE DEAMINASE"/>
    <property type="match status" value="1"/>
</dbReference>
<dbReference type="Pfam" id="PF07969">
    <property type="entry name" value="Amidohydro_3"/>
    <property type="match status" value="1"/>
</dbReference>
<dbReference type="SUPFAM" id="SSF51338">
    <property type="entry name" value="Composite domain of metallo-dependent hydrolases"/>
    <property type="match status" value="1"/>
</dbReference>
<dbReference type="SUPFAM" id="SSF51556">
    <property type="entry name" value="Metallo-dependent hydrolases"/>
    <property type="match status" value="1"/>
</dbReference>
<accession>O52063</accession>
<gene>
    <name type="primary">atzC</name>
</gene>
<geneLocation type="plasmid">
    <name>pADP-1</name>
</geneLocation>
<reference key="1">
    <citation type="journal article" date="1998" name="J. Bacteriol.">
        <title>AtzC is a new member of the amidohydrolase protein superfamily and is homologous to other atrazine-metabolizing enzymes.</title>
        <authorList>
            <person name="Sadowsky M.J."/>
            <person name="Tong Z."/>
            <person name="de Souza M."/>
            <person name="Wackett L.P."/>
        </authorList>
    </citation>
    <scope>NUCLEOTIDE SEQUENCE [GENOMIC DNA]</scope>
    <scope>FUNCTION</scope>
    <scope>CATALYTIC ACTIVITY</scope>
</reference>
<reference key="2">
    <citation type="journal article" date="2002" name="J. Bacteriol.">
        <title>Purification, substrate range, and metal center of AtzC: the N-isopropylammelide aminohydrolase involved in bacterial atrazine metabolism.</title>
        <authorList>
            <person name="Shapir N."/>
            <person name="Osborne J.P."/>
            <person name="Johnson G."/>
            <person name="Sadowsky M.J."/>
            <person name="Wackett L.P."/>
        </authorList>
    </citation>
    <scope>FUNCTION</scope>
    <scope>COFACTOR</scope>
    <scope>BIOPHYSICOCHEMICAL PROPERTIES</scope>
    <scope>SUBUNIT</scope>
    <scope>ACTIVITY REGULATION</scope>
    <scope>EPR SPECTROSCOPY</scope>
    <source>
        <strain>ADP</strain>
    </source>
</reference>
<reference key="3">
    <citation type="submission" date="2007-08" db="PDB data bank">
        <title>Crystal structure of N-isopropylammelide isopropylaminohydrolase AtzC from Pseudomonas sp. strain ADP complexed with Zn.</title>
        <authorList>
            <person name="Fedorov A.A."/>
            <person name="Fedorov E.V."/>
            <person name="Seffernick J."/>
            <person name="Wackett L.P."/>
            <person name="Burley S.K."/>
            <person name="Almo S.C."/>
        </authorList>
    </citation>
    <scope>X-RAY CRYSTALLOGRAPHY (2.24 ANGSTROMS) IN COMPLEX WITH ZINC</scope>
    <scope>COFACTOR</scope>
    <source>
        <strain>ADP</strain>
    </source>
</reference>
<reference key="4">
    <citation type="journal article" date="2015" name="PLoS ONE">
        <title>X-ray structure and mutagenesis studies of the N-isopropylammelide isopropylaminohydrolase, AtzC.</title>
        <authorList>
            <person name="Balotra S."/>
            <person name="Warden A.C."/>
            <person name="Newman J."/>
            <person name="Briggs L.J."/>
            <person name="Scott C."/>
            <person name="Peat T.S."/>
        </authorList>
    </citation>
    <scope>X-RAY CRYSTALLOGRAPHY (1.84 ANGSTROMS) IN COMPLEX WITH ZINC AND INHIBITOR OF WILD-TYPE AND MUTANTS ALA-219; ALA-249 AND ASP-304</scope>
    <scope>CATALYTIC ACTIVITY</scope>
    <scope>SUBUNIT</scope>
    <scope>BIOPHYSICOCHEMICAL PROPERTIES</scope>
    <scope>MUTAGENESIS OF LYS-65; GLN-160; ASP-188; HIS-219; HIS-249; ASP-303; ASN-304 AND TRP-309</scope>
    <scope>ACTIVE SITE</scope>
    <source>
        <strain>ADP</strain>
    </source>
</reference>
<keyword id="KW-0002">3D-structure</keyword>
<keyword id="KW-0963">Cytoplasm</keyword>
<keyword id="KW-0378">Hydrolase</keyword>
<keyword id="KW-0479">Metal-binding</keyword>
<keyword id="KW-0614">Plasmid</keyword>
<keyword id="KW-0862">Zinc</keyword>
<name>ATZC_PSESD</name>
<organism>
    <name type="scientific">Pseudomonas sp. (strain ADP)</name>
    <dbReference type="NCBI Taxonomy" id="47660"/>
    <lineage>
        <taxon>Bacteria</taxon>
        <taxon>Pseudomonadati</taxon>
        <taxon>Pseudomonadota</taxon>
        <taxon>Gammaproteobacteria</taxon>
        <taxon>Pseudomonadales</taxon>
        <taxon>Pseudomonadaceae</taxon>
        <taxon>Pseudomonas</taxon>
    </lineage>
</organism>
<evidence type="ECO:0000269" key="1">
    <source>
    </source>
</evidence>
<evidence type="ECO:0000269" key="2">
    <source>
    </source>
</evidence>
<evidence type="ECO:0000269" key="3">
    <source>
    </source>
</evidence>
<evidence type="ECO:0000269" key="4">
    <source ref="3"/>
</evidence>
<evidence type="ECO:0000305" key="5"/>
<evidence type="ECO:0007829" key="6">
    <source>
        <dbReference type="PDB" id="4CQB"/>
    </source>
</evidence>
<sequence>MSKDFDLIIRNAYLSEKDSVYDIGIVGDRIIKIEAKIEGTVKDEIDAKGNLVSPGFVDAHTHMDKSFTSTGERLPKFWSRPYTRDAAIEDGLKYYKNATHEEIKRHVIEHAHMQVLHGTLYTRTHVDVDSVAKTKAVEAVLEAKEELKDLIDIQVVAFAQSGFFVDLESESLIRKSLDMGCDLVGGVDPATRENNVEGSLDLCFKLAKEYDVDIDYHIHDIGTVGVYSINRLAQKTIENGYKGRVTTSHAWCFADAPSEWLDEAIPLYKDSGMKFVTCFSSTPPTMPVIKLLEAGINLGCASDNIRDFWVPFGNGDMVQGALIETQRLELKTNRDLGLIWKMITSEGARVLGIEKNYGIEVGKKADLVVLNSLSPQWAIIDQAKRLCVIKNGRIIVKDEVIVA</sequence>
<feature type="chain" id="PRO_0000182707" description="N-isopropylammelide isopropyl amidohydrolase">
    <location>
        <begin position="1"/>
        <end position="403"/>
    </location>
</feature>
<feature type="active site" description="Proton donor/acceptor" evidence="2">
    <location>
        <position position="249"/>
    </location>
</feature>
<feature type="binding site" evidence="2 4">
    <location>
        <position position="60"/>
    </location>
    <ligand>
        <name>Zn(2+)</name>
        <dbReference type="ChEBI" id="CHEBI:29105"/>
        <note>catalytic</note>
    </ligand>
</feature>
<feature type="binding site" evidence="2 4">
    <location>
        <position position="62"/>
    </location>
    <ligand>
        <name>Zn(2+)</name>
        <dbReference type="ChEBI" id="CHEBI:29105"/>
        <note>catalytic</note>
    </ligand>
</feature>
<feature type="binding site" evidence="2 4">
    <location>
        <position position="217"/>
    </location>
    <ligand>
        <name>Zn(2+)</name>
        <dbReference type="ChEBI" id="CHEBI:29105"/>
        <note>catalytic</note>
    </ligand>
</feature>
<feature type="binding site" evidence="2 4">
    <location>
        <position position="303"/>
    </location>
    <ligand>
        <name>Zn(2+)</name>
        <dbReference type="ChEBI" id="CHEBI:29105"/>
        <note>catalytic</note>
    </ligand>
</feature>
<feature type="mutagenesis site" description="30-fold increase in kcat with ammelide as substrate." evidence="2">
    <original>K</original>
    <variation>A</variation>
    <location>
        <position position="65"/>
    </location>
</feature>
<feature type="mutagenesis site" description="12-fold increase in kcat with ammelide as substrate." evidence="2">
    <original>K</original>
    <variation>R</variation>
    <location>
        <position position="65"/>
    </location>
</feature>
<feature type="mutagenesis site" description="Almost no effect." evidence="2">
    <original>Q</original>
    <variation>A</variation>
    <variation>E</variation>
    <location>
        <position position="160"/>
    </location>
</feature>
<feature type="mutagenesis site" description="5-fold increase in kcat with ammelide as substrate." evidence="2">
    <original>D</original>
    <variation>A</variation>
    <location>
        <position position="188"/>
    </location>
</feature>
<feature type="mutagenesis site" description="No effect." evidence="2">
    <original>D</original>
    <variation>N</variation>
    <location>
        <position position="188"/>
    </location>
</feature>
<feature type="mutagenesis site" description="Almost no effect." evidence="2">
    <original>H</original>
    <variation>A</variation>
    <location>
        <position position="219"/>
    </location>
</feature>
<feature type="mutagenesis site" description="No activity." evidence="2">
    <original>H</original>
    <variation>A</variation>
    <location>
        <position position="249"/>
    </location>
</feature>
<feature type="mutagenesis site" description="Almost no effect." evidence="2">
    <original>D</original>
    <variation>A</variation>
    <variation>N</variation>
    <location>
        <position position="303"/>
    </location>
</feature>
<feature type="mutagenesis site" description="Almost no effect." evidence="2">
    <original>N</original>
    <variation>A</variation>
    <location>
        <position position="304"/>
    </location>
</feature>
<feature type="mutagenesis site" description="7-fold increase in kcat with ammelide as substrate." evidence="2">
    <original>N</original>
    <variation>D</variation>
    <location>
        <position position="304"/>
    </location>
</feature>
<feature type="mutagenesis site" description="Almost no effect." evidence="2">
    <original>W</original>
    <variation>A</variation>
    <variation>F</variation>
    <location>
        <position position="309"/>
    </location>
</feature>
<feature type="strand" evidence="6">
    <location>
        <begin position="4"/>
        <end position="14"/>
    </location>
</feature>
<feature type="turn" evidence="6">
    <location>
        <begin position="15"/>
        <end position="18"/>
    </location>
</feature>
<feature type="strand" evidence="6">
    <location>
        <begin position="19"/>
        <end position="26"/>
    </location>
</feature>
<feature type="strand" evidence="6">
    <location>
        <begin position="29"/>
        <end position="36"/>
    </location>
</feature>
<feature type="strand" evidence="6">
    <location>
        <begin position="41"/>
        <end position="46"/>
    </location>
</feature>
<feature type="strand" evidence="6">
    <location>
        <begin position="51"/>
        <end position="54"/>
    </location>
</feature>
<feature type="strand" evidence="6">
    <location>
        <begin position="56"/>
        <end position="61"/>
    </location>
</feature>
<feature type="helix" evidence="6">
    <location>
        <begin position="63"/>
        <end position="65"/>
    </location>
</feature>
<feature type="turn" evidence="6">
    <location>
        <begin position="66"/>
        <end position="69"/>
    </location>
</feature>
<feature type="strand" evidence="6">
    <location>
        <begin position="71"/>
        <end position="74"/>
    </location>
</feature>
<feature type="turn" evidence="6">
    <location>
        <begin position="76"/>
        <end position="79"/>
    </location>
</feature>
<feature type="helix" evidence="6">
    <location>
        <begin position="84"/>
        <end position="97"/>
    </location>
</feature>
<feature type="helix" evidence="6">
    <location>
        <begin position="100"/>
        <end position="116"/>
    </location>
</feature>
<feature type="strand" evidence="6">
    <location>
        <begin position="119"/>
        <end position="127"/>
    </location>
</feature>
<feature type="turn" evidence="6">
    <location>
        <begin position="130"/>
        <end position="134"/>
    </location>
</feature>
<feature type="helix" evidence="6">
    <location>
        <begin position="135"/>
        <end position="146"/>
    </location>
</feature>
<feature type="turn" evidence="6">
    <location>
        <begin position="147"/>
        <end position="150"/>
    </location>
</feature>
<feature type="strand" evidence="6">
    <location>
        <begin position="152"/>
        <end position="158"/>
    </location>
</feature>
<feature type="turn" evidence="6">
    <location>
        <begin position="163"/>
        <end position="165"/>
    </location>
</feature>
<feature type="helix" evidence="6">
    <location>
        <begin position="169"/>
        <end position="179"/>
    </location>
</feature>
<feature type="strand" evidence="6">
    <location>
        <begin position="182"/>
        <end position="185"/>
    </location>
</feature>
<feature type="turn" evidence="6">
    <location>
        <begin position="189"/>
        <end position="193"/>
    </location>
</feature>
<feature type="helix" evidence="6">
    <location>
        <begin position="196"/>
        <end position="209"/>
    </location>
</feature>
<feature type="strand" evidence="6">
    <location>
        <begin position="213"/>
        <end position="218"/>
    </location>
</feature>
<feature type="helix" evidence="6">
    <location>
        <begin position="222"/>
        <end position="238"/>
    </location>
</feature>
<feature type="strand" evidence="6">
    <location>
        <begin position="245"/>
        <end position="249"/>
    </location>
</feature>
<feature type="helix" evidence="6">
    <location>
        <begin position="252"/>
        <end position="255"/>
    </location>
</feature>
<feature type="helix" evidence="6">
    <location>
        <begin position="258"/>
        <end position="271"/>
    </location>
</feature>
<feature type="strand" evidence="6">
    <location>
        <begin position="274"/>
        <end position="278"/>
    </location>
</feature>
<feature type="turn" evidence="6">
    <location>
        <begin position="279"/>
        <end position="281"/>
    </location>
</feature>
<feature type="helix" evidence="6">
    <location>
        <begin position="288"/>
        <end position="293"/>
    </location>
</feature>
<feature type="strand" evidence="6">
    <location>
        <begin position="297"/>
        <end position="301"/>
    </location>
</feature>
<feature type="strand" evidence="6">
    <location>
        <begin position="306"/>
        <end position="309"/>
    </location>
</feature>
<feature type="helix" evidence="6">
    <location>
        <begin position="317"/>
        <end position="328"/>
    </location>
</feature>
<feature type="helix" evidence="6">
    <location>
        <begin position="333"/>
        <end position="343"/>
    </location>
</feature>
<feature type="helix" evidence="6">
    <location>
        <begin position="345"/>
        <end position="351"/>
    </location>
</feature>
<feature type="helix" evidence="6">
    <location>
        <begin position="354"/>
        <end position="356"/>
    </location>
</feature>
<feature type="strand" evidence="6">
    <location>
        <begin position="358"/>
        <end position="360"/>
    </location>
</feature>
<feature type="strand" evidence="6">
    <location>
        <begin position="367"/>
        <end position="374"/>
    </location>
</feature>
<feature type="helix" evidence="6">
    <location>
        <begin position="375"/>
        <end position="381"/>
    </location>
</feature>
<feature type="strand" evidence="6">
    <location>
        <begin position="385"/>
        <end position="390"/>
    </location>
</feature>
<feature type="strand" evidence="6">
    <location>
        <begin position="393"/>
        <end position="397"/>
    </location>
</feature>
<comment type="function">
    <text evidence="1 3">Transforms N-isopropylammelide to cyanuric acid and isopropylamine.</text>
</comment>
<comment type="catalytic activity">
    <reaction evidence="1 2">
        <text>N-isopropylammelide + H2O + H(+) = isopropylamine + cyanurate</text>
        <dbReference type="Rhea" id="RHEA:23608"/>
        <dbReference type="ChEBI" id="CHEBI:15377"/>
        <dbReference type="ChEBI" id="CHEBI:15378"/>
        <dbReference type="ChEBI" id="CHEBI:17247"/>
        <dbReference type="ChEBI" id="CHEBI:38028"/>
        <dbReference type="ChEBI" id="CHEBI:57492"/>
        <dbReference type="EC" id="3.5.4.42"/>
    </reaction>
</comment>
<comment type="cofactor">
    <cofactor evidence="1 2 4">
        <name>Zn(2+)</name>
        <dbReference type="ChEBI" id="CHEBI:29105"/>
    </cofactor>
    <text evidence="1 2 4">Binds 1 Zn(2+) ion per subunit.</text>
</comment>
<comment type="activity regulation">
    <text evidence="1">Inhibited by N-ethylammeline, N-hydroxyethylammeline, N-isopropylammeline, ammeline and 2-amino-4hydroxy-1,3,5-s-triazine.</text>
</comment>
<comment type="biophysicochemical properties">
    <kinetics>
        <KM evidence="1">817 uM for N-methylammelide</KM>
        <KM evidence="1">308 uM for N-ethylammelide</KM>
        <KM evidence="1">3860 uM for N-hydroxyethylammelide</KM>
        <KM evidence="1">406 uM for N-isopropylammelide</KM>
        <KM evidence="1">580 uM for N-cyclopropylammelide</KM>
        <KM evidence="1">299 uM for N-t-butylammelide</KM>
        <KM evidence="1">155 uM for N-dimethylammelide</KM>
        <KM evidence="1">1320 uM for ammelide</KM>
        <text evidence="1">kcat is 178 sec(-1) for N-methylammelide. kcat is 209 sec(-1) for N-ethylammelide. kcat is 80.6 sec(-1) for N-hydroxyethylammelide. kcat is 13.3 sec(-1) for N-isopropylammelide. kcat is 98.2 sec(-1) for N-cyclopropylammelide. kcat is 0.07 sec(-1) for N-t-butylammelide. kcat is 10.7 sec(-1) for N-dimethylammelide. kcat is 1.65 sec(-1) for ammelide.</text>
    </kinetics>
    <phDependence>
        <text evidence="2">Optimum pH is 7.25.</text>
    </phDependence>
</comment>
<comment type="pathway">
    <text>Xenobiotic degradation; atrazine degradation; cyanurate from atrazine: step 3/3.</text>
</comment>
<comment type="subunit">
    <text evidence="1 2">Homotetramer.</text>
</comment>
<comment type="subcellular location">
    <subcellularLocation>
        <location evidence="5">Cytoplasm</location>
    </subcellularLocation>
</comment>
<comment type="similarity">
    <text evidence="5">Belongs to the metallo-dependent hydrolases superfamily. N-acyl-D-amino-acid deacylase family.</text>
</comment>